<protein>
    <recommendedName>
        <fullName evidence="1">Flagellar L-ring protein</fullName>
    </recommendedName>
    <alternativeName>
        <fullName evidence="1">Basal body L-ring protein</fullName>
    </alternativeName>
</protein>
<gene>
    <name evidence="1" type="primary">flgH</name>
    <name type="ordered locus">Pfl01_1503</name>
</gene>
<sequence length="231" mass="24256">MKRFVSVVALSGVVSLAGCVAPTPKPNDPYYAPVLPRTPLPSAANNGSIYQAGFEQNLYSDRKAFRVGDIITITLNERTQASKNANSQVAKNSKTGIGLTSLFGGSATTNNPLGGNDLSLDVGYSGDRATKGDSKAAQGNTLTGSITVTVADVLPNGIIAVRGEKWMTLNTGDELVRIAGLVRADDIATDNTVSSTRVADARITYSGTGSFADASQPGWFDRFFLSPLFPF</sequence>
<proteinExistence type="inferred from homology"/>
<keyword id="KW-0975">Bacterial flagellum</keyword>
<keyword id="KW-0998">Cell outer membrane</keyword>
<keyword id="KW-0449">Lipoprotein</keyword>
<keyword id="KW-0472">Membrane</keyword>
<keyword id="KW-0564">Palmitate</keyword>
<keyword id="KW-0732">Signal</keyword>
<reference key="1">
    <citation type="journal article" date="2009" name="Genome Biol.">
        <title>Genomic and genetic analyses of diversity and plant interactions of Pseudomonas fluorescens.</title>
        <authorList>
            <person name="Silby M.W."/>
            <person name="Cerdeno-Tarraga A.M."/>
            <person name="Vernikos G.S."/>
            <person name="Giddens S.R."/>
            <person name="Jackson R.W."/>
            <person name="Preston G.M."/>
            <person name="Zhang X.-X."/>
            <person name="Moon C.D."/>
            <person name="Gehrig S.M."/>
            <person name="Godfrey S.A.C."/>
            <person name="Knight C.G."/>
            <person name="Malone J.G."/>
            <person name="Robinson Z."/>
            <person name="Spiers A.J."/>
            <person name="Harris S."/>
            <person name="Challis G.L."/>
            <person name="Yaxley A.M."/>
            <person name="Harris D."/>
            <person name="Seeger K."/>
            <person name="Murphy L."/>
            <person name="Rutter S."/>
            <person name="Squares R."/>
            <person name="Quail M.A."/>
            <person name="Saunders E."/>
            <person name="Mavromatis K."/>
            <person name="Brettin T.S."/>
            <person name="Bentley S.D."/>
            <person name="Hothersall J."/>
            <person name="Stephens E."/>
            <person name="Thomas C.M."/>
            <person name="Parkhill J."/>
            <person name="Levy S.B."/>
            <person name="Rainey P.B."/>
            <person name="Thomson N.R."/>
        </authorList>
    </citation>
    <scope>NUCLEOTIDE SEQUENCE [LARGE SCALE GENOMIC DNA]</scope>
    <source>
        <strain>Pf0-1</strain>
    </source>
</reference>
<evidence type="ECO:0000255" key="1">
    <source>
        <dbReference type="HAMAP-Rule" id="MF_00415"/>
    </source>
</evidence>
<comment type="function">
    <text evidence="1">Assembles around the rod to form the L-ring and probably protects the motor/basal body from shearing forces during rotation.</text>
</comment>
<comment type="subunit">
    <text evidence="1">The basal body constitutes a major portion of the flagellar organelle and consists of four rings (L,P,S, and M) mounted on a central rod.</text>
</comment>
<comment type="subcellular location">
    <subcellularLocation>
        <location evidence="1">Cell outer membrane</location>
        <topology evidence="1">Lipid-anchor</topology>
    </subcellularLocation>
    <subcellularLocation>
        <location evidence="1">Bacterial flagellum basal body</location>
    </subcellularLocation>
</comment>
<comment type="similarity">
    <text evidence="1">Belongs to the FlgH family.</text>
</comment>
<dbReference type="EMBL" id="CP000094">
    <property type="protein sequence ID" value="ABA73246.1"/>
    <property type="molecule type" value="Genomic_DNA"/>
</dbReference>
<dbReference type="RefSeq" id="WP_011333018.1">
    <property type="nucleotide sequence ID" value="NC_007492.2"/>
</dbReference>
<dbReference type="SMR" id="Q3KG60"/>
<dbReference type="KEGG" id="pfo:Pfl01_1503"/>
<dbReference type="eggNOG" id="COG2063">
    <property type="taxonomic scope" value="Bacteria"/>
</dbReference>
<dbReference type="HOGENOM" id="CLU_069313_0_2_6"/>
<dbReference type="Proteomes" id="UP000002704">
    <property type="component" value="Chromosome"/>
</dbReference>
<dbReference type="GO" id="GO:0009427">
    <property type="term" value="C:bacterial-type flagellum basal body, distal rod, L ring"/>
    <property type="evidence" value="ECO:0007669"/>
    <property type="project" value="InterPro"/>
</dbReference>
<dbReference type="GO" id="GO:0009279">
    <property type="term" value="C:cell outer membrane"/>
    <property type="evidence" value="ECO:0007669"/>
    <property type="project" value="UniProtKB-SubCell"/>
</dbReference>
<dbReference type="GO" id="GO:0003774">
    <property type="term" value="F:cytoskeletal motor activity"/>
    <property type="evidence" value="ECO:0007669"/>
    <property type="project" value="InterPro"/>
</dbReference>
<dbReference type="GO" id="GO:0071973">
    <property type="term" value="P:bacterial-type flagellum-dependent cell motility"/>
    <property type="evidence" value="ECO:0007669"/>
    <property type="project" value="InterPro"/>
</dbReference>
<dbReference type="HAMAP" id="MF_00415">
    <property type="entry name" value="FlgH"/>
    <property type="match status" value="1"/>
</dbReference>
<dbReference type="InterPro" id="IPR000527">
    <property type="entry name" value="Flag_Lring"/>
</dbReference>
<dbReference type="NCBIfam" id="NF001304">
    <property type="entry name" value="PRK00249.1-4"/>
    <property type="match status" value="1"/>
</dbReference>
<dbReference type="PANTHER" id="PTHR34933">
    <property type="entry name" value="FLAGELLAR L-RING PROTEIN"/>
    <property type="match status" value="1"/>
</dbReference>
<dbReference type="PANTHER" id="PTHR34933:SF1">
    <property type="entry name" value="FLAGELLAR L-RING PROTEIN"/>
    <property type="match status" value="1"/>
</dbReference>
<dbReference type="Pfam" id="PF02107">
    <property type="entry name" value="FlgH"/>
    <property type="match status" value="1"/>
</dbReference>
<dbReference type="PRINTS" id="PR01008">
    <property type="entry name" value="FLGLRINGFLGH"/>
</dbReference>
<dbReference type="PROSITE" id="PS51257">
    <property type="entry name" value="PROKAR_LIPOPROTEIN"/>
    <property type="match status" value="1"/>
</dbReference>
<organism>
    <name type="scientific">Pseudomonas fluorescens (strain Pf0-1)</name>
    <dbReference type="NCBI Taxonomy" id="205922"/>
    <lineage>
        <taxon>Bacteria</taxon>
        <taxon>Pseudomonadati</taxon>
        <taxon>Pseudomonadota</taxon>
        <taxon>Gammaproteobacteria</taxon>
        <taxon>Pseudomonadales</taxon>
        <taxon>Pseudomonadaceae</taxon>
        <taxon>Pseudomonas</taxon>
    </lineage>
</organism>
<accession>Q3KG60</accession>
<feature type="signal peptide" evidence="1">
    <location>
        <begin position="1"/>
        <end position="18"/>
    </location>
</feature>
<feature type="chain" id="PRO_0000236829" description="Flagellar L-ring protein">
    <location>
        <begin position="19"/>
        <end position="231"/>
    </location>
</feature>
<feature type="lipid moiety-binding region" description="N-palmitoyl cysteine" evidence="1">
    <location>
        <position position="19"/>
    </location>
</feature>
<feature type="lipid moiety-binding region" description="S-diacylglycerol cysteine" evidence="1">
    <location>
        <position position="19"/>
    </location>
</feature>
<name>FLGH_PSEPF</name>